<name>RNPH_HAHCH</name>
<accession>Q2S8P0</accession>
<keyword id="KW-0548">Nucleotidyltransferase</keyword>
<keyword id="KW-1185">Reference proteome</keyword>
<keyword id="KW-0694">RNA-binding</keyword>
<keyword id="KW-0698">rRNA processing</keyword>
<keyword id="KW-0808">Transferase</keyword>
<keyword id="KW-0819">tRNA processing</keyword>
<keyword id="KW-0820">tRNA-binding</keyword>
<evidence type="ECO:0000255" key="1">
    <source>
        <dbReference type="HAMAP-Rule" id="MF_00564"/>
    </source>
</evidence>
<organism>
    <name type="scientific">Hahella chejuensis (strain KCTC 2396)</name>
    <dbReference type="NCBI Taxonomy" id="349521"/>
    <lineage>
        <taxon>Bacteria</taxon>
        <taxon>Pseudomonadati</taxon>
        <taxon>Pseudomonadota</taxon>
        <taxon>Gammaproteobacteria</taxon>
        <taxon>Oceanospirillales</taxon>
        <taxon>Hahellaceae</taxon>
        <taxon>Hahella</taxon>
    </lineage>
</organism>
<feature type="chain" id="PRO_1000024818" description="Ribonuclease PH">
    <location>
        <begin position="1"/>
        <end position="238"/>
    </location>
</feature>
<feature type="binding site" evidence="1">
    <location>
        <position position="86"/>
    </location>
    <ligand>
        <name>phosphate</name>
        <dbReference type="ChEBI" id="CHEBI:43474"/>
        <note>substrate</note>
    </ligand>
</feature>
<feature type="binding site" evidence="1">
    <location>
        <begin position="124"/>
        <end position="126"/>
    </location>
    <ligand>
        <name>phosphate</name>
        <dbReference type="ChEBI" id="CHEBI:43474"/>
        <note>substrate</note>
    </ligand>
</feature>
<comment type="function">
    <text evidence="1">Phosphorolytic 3'-5' exoribonuclease that plays an important role in tRNA 3'-end maturation. Removes nucleotide residues following the 3'-CCA terminus of tRNAs; can also add nucleotides to the ends of RNA molecules by using nucleoside diphosphates as substrates, but this may not be physiologically important. Probably plays a role in initiation of 16S rRNA degradation (leading to ribosome degradation) during starvation.</text>
</comment>
<comment type="catalytic activity">
    <reaction evidence="1">
        <text>tRNA(n+1) + phosphate = tRNA(n) + a ribonucleoside 5'-diphosphate</text>
        <dbReference type="Rhea" id="RHEA:10628"/>
        <dbReference type="Rhea" id="RHEA-COMP:17343"/>
        <dbReference type="Rhea" id="RHEA-COMP:17344"/>
        <dbReference type="ChEBI" id="CHEBI:43474"/>
        <dbReference type="ChEBI" id="CHEBI:57930"/>
        <dbReference type="ChEBI" id="CHEBI:173114"/>
        <dbReference type="EC" id="2.7.7.56"/>
    </reaction>
</comment>
<comment type="subunit">
    <text evidence="1">Homohexameric ring arranged as a trimer of dimers.</text>
</comment>
<comment type="similarity">
    <text evidence="1">Belongs to the RNase PH family.</text>
</comment>
<dbReference type="EC" id="2.7.7.56" evidence="1"/>
<dbReference type="EMBL" id="CP000155">
    <property type="protein sequence ID" value="ABC32984.1"/>
    <property type="molecule type" value="Genomic_DNA"/>
</dbReference>
<dbReference type="RefSeq" id="WP_011400038.1">
    <property type="nucleotide sequence ID" value="NC_007645.1"/>
</dbReference>
<dbReference type="SMR" id="Q2S8P0"/>
<dbReference type="STRING" id="349521.HCH_06338"/>
<dbReference type="KEGG" id="hch:HCH_06338"/>
<dbReference type="eggNOG" id="COG0689">
    <property type="taxonomic scope" value="Bacteria"/>
</dbReference>
<dbReference type="HOGENOM" id="CLU_050858_0_0_6"/>
<dbReference type="OrthoDB" id="9802265at2"/>
<dbReference type="Proteomes" id="UP000000238">
    <property type="component" value="Chromosome"/>
</dbReference>
<dbReference type="GO" id="GO:0000175">
    <property type="term" value="F:3'-5'-RNA exonuclease activity"/>
    <property type="evidence" value="ECO:0007669"/>
    <property type="project" value="UniProtKB-UniRule"/>
</dbReference>
<dbReference type="GO" id="GO:0000049">
    <property type="term" value="F:tRNA binding"/>
    <property type="evidence" value="ECO:0007669"/>
    <property type="project" value="UniProtKB-UniRule"/>
</dbReference>
<dbReference type="GO" id="GO:0009022">
    <property type="term" value="F:tRNA nucleotidyltransferase activity"/>
    <property type="evidence" value="ECO:0007669"/>
    <property type="project" value="UniProtKB-UniRule"/>
</dbReference>
<dbReference type="GO" id="GO:0016075">
    <property type="term" value="P:rRNA catabolic process"/>
    <property type="evidence" value="ECO:0007669"/>
    <property type="project" value="UniProtKB-UniRule"/>
</dbReference>
<dbReference type="GO" id="GO:0006364">
    <property type="term" value="P:rRNA processing"/>
    <property type="evidence" value="ECO:0007669"/>
    <property type="project" value="UniProtKB-KW"/>
</dbReference>
<dbReference type="GO" id="GO:0008033">
    <property type="term" value="P:tRNA processing"/>
    <property type="evidence" value="ECO:0007669"/>
    <property type="project" value="UniProtKB-UniRule"/>
</dbReference>
<dbReference type="CDD" id="cd11362">
    <property type="entry name" value="RNase_PH_bact"/>
    <property type="match status" value="1"/>
</dbReference>
<dbReference type="FunFam" id="3.30.230.70:FF:000003">
    <property type="entry name" value="Ribonuclease PH"/>
    <property type="match status" value="1"/>
</dbReference>
<dbReference type="Gene3D" id="3.30.230.70">
    <property type="entry name" value="GHMP Kinase, N-terminal domain"/>
    <property type="match status" value="1"/>
</dbReference>
<dbReference type="HAMAP" id="MF_00564">
    <property type="entry name" value="RNase_PH"/>
    <property type="match status" value="1"/>
</dbReference>
<dbReference type="InterPro" id="IPR001247">
    <property type="entry name" value="ExoRNase_PH_dom1"/>
</dbReference>
<dbReference type="InterPro" id="IPR015847">
    <property type="entry name" value="ExoRNase_PH_dom2"/>
</dbReference>
<dbReference type="InterPro" id="IPR036345">
    <property type="entry name" value="ExoRNase_PH_dom2_sf"/>
</dbReference>
<dbReference type="InterPro" id="IPR027408">
    <property type="entry name" value="PNPase/RNase_PH_dom_sf"/>
</dbReference>
<dbReference type="InterPro" id="IPR020568">
    <property type="entry name" value="Ribosomal_Su5_D2-typ_SF"/>
</dbReference>
<dbReference type="InterPro" id="IPR050080">
    <property type="entry name" value="RNase_PH"/>
</dbReference>
<dbReference type="InterPro" id="IPR002381">
    <property type="entry name" value="RNase_PH_bac-type"/>
</dbReference>
<dbReference type="InterPro" id="IPR018336">
    <property type="entry name" value="RNase_PH_CS"/>
</dbReference>
<dbReference type="NCBIfam" id="TIGR01966">
    <property type="entry name" value="RNasePH"/>
    <property type="match status" value="1"/>
</dbReference>
<dbReference type="PANTHER" id="PTHR11953">
    <property type="entry name" value="EXOSOME COMPLEX COMPONENT"/>
    <property type="match status" value="1"/>
</dbReference>
<dbReference type="PANTHER" id="PTHR11953:SF0">
    <property type="entry name" value="EXOSOME COMPLEX COMPONENT RRP41"/>
    <property type="match status" value="1"/>
</dbReference>
<dbReference type="Pfam" id="PF01138">
    <property type="entry name" value="RNase_PH"/>
    <property type="match status" value="1"/>
</dbReference>
<dbReference type="Pfam" id="PF03725">
    <property type="entry name" value="RNase_PH_C"/>
    <property type="match status" value="1"/>
</dbReference>
<dbReference type="SUPFAM" id="SSF55666">
    <property type="entry name" value="Ribonuclease PH domain 2-like"/>
    <property type="match status" value="1"/>
</dbReference>
<dbReference type="SUPFAM" id="SSF54211">
    <property type="entry name" value="Ribosomal protein S5 domain 2-like"/>
    <property type="match status" value="1"/>
</dbReference>
<dbReference type="PROSITE" id="PS01277">
    <property type="entry name" value="RIBONUCLEASE_PH"/>
    <property type="match status" value="1"/>
</dbReference>
<proteinExistence type="inferred from homology"/>
<protein>
    <recommendedName>
        <fullName evidence="1">Ribonuclease PH</fullName>
        <shortName evidence="1">RNase PH</shortName>
        <ecNumber evidence="1">2.7.7.56</ecNumber>
    </recommendedName>
    <alternativeName>
        <fullName evidence="1">tRNA nucleotidyltransferase</fullName>
    </alternativeName>
</protein>
<gene>
    <name evidence="1" type="primary">rph</name>
    <name type="ordered locus">HCH_06338</name>
</gene>
<sequence length="238" mass="25669">MRPSGRQPDQTRDIKITKNYTKHAEGSVLVEFGDTKVICTATVENGVPRFLRGEDQGWVTAEYGMLPRATGTRNQREAARGKQGGRTLEIQRLIGRSLRAAVDLKKMPDISITIDCDVIQADGGTRTASITGGFVAMADAINSLLAKGQLKNNPILHKVAAISVGVYEGVPVVDLDYDEDSKAETDMNVVMTDQDGFIEVQGTAEAAPFSSAELTAMLDLAGKGIRQLFVAQEEVLQS</sequence>
<reference key="1">
    <citation type="journal article" date="2005" name="Nucleic Acids Res.">
        <title>Genomic blueprint of Hahella chejuensis, a marine microbe producing an algicidal agent.</title>
        <authorList>
            <person name="Jeong H."/>
            <person name="Yim J.H."/>
            <person name="Lee C."/>
            <person name="Choi S.-H."/>
            <person name="Park Y.K."/>
            <person name="Yoon S.H."/>
            <person name="Hur C.-G."/>
            <person name="Kang H.-Y."/>
            <person name="Kim D."/>
            <person name="Lee H.H."/>
            <person name="Park K.H."/>
            <person name="Park S.-H."/>
            <person name="Park H.-S."/>
            <person name="Lee H.K."/>
            <person name="Oh T.K."/>
            <person name="Kim J.F."/>
        </authorList>
    </citation>
    <scope>NUCLEOTIDE SEQUENCE [LARGE SCALE GENOMIC DNA]</scope>
    <source>
        <strain>KCTC 2396</strain>
    </source>
</reference>